<reference key="1">
    <citation type="journal article" date="1992" name="Ann. Mo. Bot. Gard.">
        <title>Monophyly of the Asteridae and identification of their major lineages inferred from DNA sequences of rbcL.</title>
        <authorList>
            <person name="Olmstead R.G."/>
            <person name="Michaels H.J."/>
            <person name="Scott K.M."/>
            <person name="Palmer J.D."/>
        </authorList>
        <dbReference type="AGRICOLA" id="IND93014998"/>
    </citation>
    <scope>NUCLEOTIDE SEQUENCE [GENOMIC DNA]</scope>
</reference>
<dbReference type="EC" id="4.1.1.39" evidence="1"/>
<dbReference type="EMBL" id="L11685">
    <property type="protein sequence ID" value="AAA84721.1"/>
    <property type="molecule type" value="Genomic_DNA"/>
</dbReference>
<dbReference type="SMR" id="Q05994"/>
<dbReference type="GO" id="GO:0009507">
    <property type="term" value="C:chloroplast"/>
    <property type="evidence" value="ECO:0007669"/>
    <property type="project" value="UniProtKB-SubCell"/>
</dbReference>
<dbReference type="GO" id="GO:0000287">
    <property type="term" value="F:magnesium ion binding"/>
    <property type="evidence" value="ECO:0007669"/>
    <property type="project" value="InterPro"/>
</dbReference>
<dbReference type="GO" id="GO:0004497">
    <property type="term" value="F:monooxygenase activity"/>
    <property type="evidence" value="ECO:0007669"/>
    <property type="project" value="UniProtKB-KW"/>
</dbReference>
<dbReference type="GO" id="GO:0016984">
    <property type="term" value="F:ribulose-bisphosphate carboxylase activity"/>
    <property type="evidence" value="ECO:0007669"/>
    <property type="project" value="UniProtKB-EC"/>
</dbReference>
<dbReference type="GO" id="GO:0009853">
    <property type="term" value="P:photorespiration"/>
    <property type="evidence" value="ECO:0007669"/>
    <property type="project" value="UniProtKB-KW"/>
</dbReference>
<dbReference type="GO" id="GO:0019253">
    <property type="term" value="P:reductive pentose-phosphate cycle"/>
    <property type="evidence" value="ECO:0007669"/>
    <property type="project" value="UniProtKB-KW"/>
</dbReference>
<dbReference type="CDD" id="cd08212">
    <property type="entry name" value="RuBisCO_large_I"/>
    <property type="match status" value="1"/>
</dbReference>
<dbReference type="FunFam" id="3.20.20.110:FF:000001">
    <property type="entry name" value="Ribulose bisphosphate carboxylase large chain"/>
    <property type="match status" value="1"/>
</dbReference>
<dbReference type="Gene3D" id="3.20.20.110">
    <property type="entry name" value="Ribulose bisphosphate carboxylase, large subunit, C-terminal domain"/>
    <property type="match status" value="1"/>
</dbReference>
<dbReference type="Gene3D" id="3.30.70.150">
    <property type="entry name" value="RuBisCO large subunit, N-terminal domain"/>
    <property type="match status" value="1"/>
</dbReference>
<dbReference type="HAMAP" id="MF_01338">
    <property type="entry name" value="RuBisCO_L_type1"/>
    <property type="match status" value="1"/>
</dbReference>
<dbReference type="InterPro" id="IPR033966">
    <property type="entry name" value="RuBisCO"/>
</dbReference>
<dbReference type="InterPro" id="IPR020878">
    <property type="entry name" value="RuBisCo_large_chain_AS"/>
</dbReference>
<dbReference type="InterPro" id="IPR000685">
    <property type="entry name" value="RuBisCO_lsu_C"/>
</dbReference>
<dbReference type="InterPro" id="IPR036376">
    <property type="entry name" value="RuBisCO_lsu_C_sf"/>
</dbReference>
<dbReference type="InterPro" id="IPR017443">
    <property type="entry name" value="RuBisCO_lsu_fd_N"/>
</dbReference>
<dbReference type="InterPro" id="IPR036422">
    <property type="entry name" value="RuBisCO_lsu_N_sf"/>
</dbReference>
<dbReference type="InterPro" id="IPR020888">
    <property type="entry name" value="RuBisCO_lsuI"/>
</dbReference>
<dbReference type="NCBIfam" id="NF003252">
    <property type="entry name" value="PRK04208.1"/>
    <property type="match status" value="1"/>
</dbReference>
<dbReference type="PANTHER" id="PTHR42704">
    <property type="entry name" value="RIBULOSE BISPHOSPHATE CARBOXYLASE"/>
    <property type="match status" value="1"/>
</dbReference>
<dbReference type="PANTHER" id="PTHR42704:SF15">
    <property type="entry name" value="RIBULOSE BISPHOSPHATE CARBOXYLASE LARGE CHAIN"/>
    <property type="match status" value="1"/>
</dbReference>
<dbReference type="Pfam" id="PF00016">
    <property type="entry name" value="RuBisCO_large"/>
    <property type="match status" value="1"/>
</dbReference>
<dbReference type="Pfam" id="PF02788">
    <property type="entry name" value="RuBisCO_large_N"/>
    <property type="match status" value="1"/>
</dbReference>
<dbReference type="SFLD" id="SFLDG01052">
    <property type="entry name" value="RuBisCO"/>
    <property type="match status" value="1"/>
</dbReference>
<dbReference type="SFLD" id="SFLDS00014">
    <property type="entry name" value="RuBisCO"/>
    <property type="match status" value="1"/>
</dbReference>
<dbReference type="SFLD" id="SFLDG00301">
    <property type="entry name" value="RuBisCO-like_proteins"/>
    <property type="match status" value="1"/>
</dbReference>
<dbReference type="SUPFAM" id="SSF51649">
    <property type="entry name" value="RuBisCo, C-terminal domain"/>
    <property type="match status" value="1"/>
</dbReference>
<dbReference type="SUPFAM" id="SSF54966">
    <property type="entry name" value="RuBisCO, large subunit, small (N-terminal) domain"/>
    <property type="match status" value="1"/>
</dbReference>
<dbReference type="PROSITE" id="PS00157">
    <property type="entry name" value="RUBISCO_LARGE"/>
    <property type="match status" value="1"/>
</dbReference>
<geneLocation type="chloroplast"/>
<comment type="function">
    <text evidence="1">RuBisCO catalyzes two reactions: the carboxylation of D-ribulose 1,5-bisphosphate, the primary event in carbon dioxide fixation, as well as the oxidative fragmentation of the pentose substrate in the photorespiration process. Both reactions occur simultaneously and in competition at the same active site.</text>
</comment>
<comment type="catalytic activity">
    <reaction evidence="1">
        <text>2 (2R)-3-phosphoglycerate + 2 H(+) = D-ribulose 1,5-bisphosphate + CO2 + H2O</text>
        <dbReference type="Rhea" id="RHEA:23124"/>
        <dbReference type="ChEBI" id="CHEBI:15377"/>
        <dbReference type="ChEBI" id="CHEBI:15378"/>
        <dbReference type="ChEBI" id="CHEBI:16526"/>
        <dbReference type="ChEBI" id="CHEBI:57870"/>
        <dbReference type="ChEBI" id="CHEBI:58272"/>
        <dbReference type="EC" id="4.1.1.39"/>
    </reaction>
</comment>
<comment type="catalytic activity">
    <reaction evidence="1">
        <text>D-ribulose 1,5-bisphosphate + O2 = 2-phosphoglycolate + (2R)-3-phosphoglycerate + 2 H(+)</text>
        <dbReference type="Rhea" id="RHEA:36631"/>
        <dbReference type="ChEBI" id="CHEBI:15378"/>
        <dbReference type="ChEBI" id="CHEBI:15379"/>
        <dbReference type="ChEBI" id="CHEBI:57870"/>
        <dbReference type="ChEBI" id="CHEBI:58033"/>
        <dbReference type="ChEBI" id="CHEBI:58272"/>
    </reaction>
</comment>
<comment type="cofactor">
    <cofactor evidence="1">
        <name>Mg(2+)</name>
        <dbReference type="ChEBI" id="CHEBI:18420"/>
    </cofactor>
    <text evidence="1">Binds 1 Mg(2+) ion per subunit.</text>
</comment>
<comment type="subunit">
    <text evidence="1">Heterohexadecamer of 8 large chains and 8 small chains; disulfide-linked. The disulfide link is formed within the large subunit homodimers.</text>
</comment>
<comment type="subcellular location">
    <subcellularLocation>
        <location>Plastid</location>
        <location>Chloroplast</location>
    </subcellularLocation>
</comment>
<comment type="PTM">
    <text evidence="1">The disulfide bond which can form in the large chain dimeric partners within the hexadecamer appears to be associated with oxidative stress and protein turnover.</text>
</comment>
<comment type="miscellaneous">
    <text evidence="1">The basic functional RuBisCO is composed of a large chain homodimer in a 'head-to-tail' conformation. In form I RuBisCO this homodimer is arranged in a barrel-like tetramer with the small subunits forming a tetrameric 'cap' on each end of the 'barrel'.</text>
</comment>
<comment type="similarity">
    <text evidence="1">Belongs to the RuBisCO large chain family. Type I subfamily.</text>
</comment>
<protein>
    <recommendedName>
        <fullName evidence="1">Ribulose bisphosphate carboxylase large chain</fullName>
        <shortName evidence="1">RuBisCO large subunit</shortName>
        <ecNumber evidence="1">4.1.1.39</ecNumber>
    </recommendedName>
</protein>
<organism>
    <name type="scientific">Villarsia calthifolia</name>
    <name type="common">Marsh flower</name>
    <name type="synonym">Ornduffia calthifolia</name>
    <dbReference type="NCBI Taxonomy" id="13756"/>
    <lineage>
        <taxon>Eukaryota</taxon>
        <taxon>Viridiplantae</taxon>
        <taxon>Streptophyta</taxon>
        <taxon>Embryophyta</taxon>
        <taxon>Tracheophyta</taxon>
        <taxon>Spermatophyta</taxon>
        <taxon>Magnoliopsida</taxon>
        <taxon>eudicotyledons</taxon>
        <taxon>Gunneridae</taxon>
        <taxon>Pentapetalae</taxon>
        <taxon>asterids</taxon>
        <taxon>campanulids</taxon>
        <taxon>Asterales</taxon>
        <taxon>Menyanthaceae</taxon>
        <taxon>Villarsia</taxon>
    </lineage>
</organism>
<evidence type="ECO:0000255" key="1">
    <source>
        <dbReference type="HAMAP-Rule" id="MF_01338"/>
    </source>
</evidence>
<sequence>DILAAFRVTPQPGVPPEEAGAAVAAESSTGTWTTVWTDGLTSLDRYKGRCYDIEPVPGEDNQYICYVAYPLDLFEEGSVTNMFTSIVGNVFGFKALRALRLEDLRIPVAYVKTFQGPPHGIQVERDKLNKYGRPLLGCTIKPKLGLSAKNYGRAVYECLRGGLDFTKDDENVNSQPFMRWRDRFLFCAEAIYKAQAETGEIKGHYLNATAGTCEEMMKRAIFARELGVPIVMHDYLTGGFTANTSLAHYCRDNGLLLHIHRAMHAVIDRQKNHGIHFRVLAKALRMSGGDHIHSGTVVGKLEGERDITLGFVDLLRDDYIEKDRSRGIYFTQDWVSLPGVLPVASGGIHVWHMPALTEIFGDDSVLQFGGGTLGHPWGNAPGAVANRVALEACVQARNEGRDLAREGNEIIREASKWSPELAAACEVWKEIKFEFQAMDTLDK</sequence>
<gene>
    <name evidence="1" type="primary">rbcL</name>
</gene>
<name>RBL_VILCA</name>
<keyword id="KW-0113">Calvin cycle</keyword>
<keyword id="KW-0120">Carbon dioxide fixation</keyword>
<keyword id="KW-0150">Chloroplast</keyword>
<keyword id="KW-1015">Disulfide bond</keyword>
<keyword id="KW-0456">Lyase</keyword>
<keyword id="KW-0460">Magnesium</keyword>
<keyword id="KW-0479">Metal-binding</keyword>
<keyword id="KW-0503">Monooxygenase</keyword>
<keyword id="KW-0560">Oxidoreductase</keyword>
<keyword id="KW-0601">Photorespiration</keyword>
<keyword id="KW-0602">Photosynthesis</keyword>
<keyword id="KW-0934">Plastid</keyword>
<proteinExistence type="inferred from homology"/>
<feature type="chain" id="PRO_0000062612" description="Ribulose bisphosphate carboxylase large chain">
    <location>
        <begin position="1" status="less than"/>
        <end position="443"/>
    </location>
</feature>
<feature type="active site" description="Proton acceptor" evidence="1">
    <location>
        <position position="141"/>
    </location>
</feature>
<feature type="active site" description="Proton acceptor" evidence="1">
    <location>
        <position position="260"/>
    </location>
</feature>
<feature type="binding site" description="in homodimeric partner" evidence="1">
    <location>
        <position position="89"/>
    </location>
    <ligand>
        <name>substrate</name>
    </ligand>
</feature>
<feature type="binding site" evidence="1">
    <location>
        <position position="139"/>
    </location>
    <ligand>
        <name>substrate</name>
    </ligand>
</feature>
<feature type="binding site" evidence="1">
    <location>
        <position position="143"/>
    </location>
    <ligand>
        <name>substrate</name>
    </ligand>
</feature>
<feature type="binding site" description="via carbamate group" evidence="1">
    <location>
        <position position="167"/>
    </location>
    <ligand>
        <name>Mg(2+)</name>
        <dbReference type="ChEBI" id="CHEBI:18420"/>
    </ligand>
</feature>
<feature type="binding site" evidence="1">
    <location>
        <position position="169"/>
    </location>
    <ligand>
        <name>Mg(2+)</name>
        <dbReference type="ChEBI" id="CHEBI:18420"/>
    </ligand>
</feature>
<feature type="binding site" evidence="1">
    <location>
        <position position="170"/>
    </location>
    <ligand>
        <name>Mg(2+)</name>
        <dbReference type="ChEBI" id="CHEBI:18420"/>
    </ligand>
</feature>
<feature type="binding site" evidence="1">
    <location>
        <position position="261"/>
    </location>
    <ligand>
        <name>substrate</name>
    </ligand>
</feature>
<feature type="binding site" evidence="1">
    <location>
        <position position="293"/>
    </location>
    <ligand>
        <name>substrate</name>
    </ligand>
</feature>
<feature type="binding site" evidence="1">
    <location>
        <position position="345"/>
    </location>
    <ligand>
        <name>substrate</name>
    </ligand>
</feature>
<feature type="site" description="Transition state stabilizer" evidence="1">
    <location>
        <position position="300"/>
    </location>
</feature>
<feature type="modified residue" description="N6-carboxylysine" evidence="1">
    <location>
        <position position="167"/>
    </location>
</feature>
<feature type="disulfide bond" description="Interchain; in linked form" evidence="1">
    <location>
        <position position="213"/>
    </location>
</feature>
<feature type="non-terminal residue">
    <location>
        <position position="1"/>
    </location>
</feature>
<accession>Q05994</accession>